<organism>
    <name type="scientific">Mycobacterium tuberculosis (strain ATCC 25618 / H37Rv)</name>
    <dbReference type="NCBI Taxonomy" id="83332"/>
    <lineage>
        <taxon>Bacteria</taxon>
        <taxon>Bacillati</taxon>
        <taxon>Actinomycetota</taxon>
        <taxon>Actinomycetes</taxon>
        <taxon>Mycobacteriales</taxon>
        <taxon>Mycobacteriaceae</taxon>
        <taxon>Mycobacterium</taxon>
        <taxon>Mycobacterium tuberculosis complex</taxon>
    </lineage>
</organism>
<name>PE16_MYCTU</name>
<evidence type="ECO:0000255" key="1"/>
<evidence type="ECO:0000269" key="2">
    <source>
    </source>
</evidence>
<evidence type="ECO:0000303" key="3">
    <source>
    </source>
</evidence>
<evidence type="ECO:0000305" key="4"/>
<evidence type="ECO:0000305" key="5">
    <source>
    </source>
</evidence>
<evidence type="ECO:0000312" key="6">
    <source>
        <dbReference type="EMBL" id="CCP44189.1"/>
    </source>
</evidence>
<reference key="1">
    <citation type="journal article" date="1998" name="Nature">
        <title>Deciphering the biology of Mycobacterium tuberculosis from the complete genome sequence.</title>
        <authorList>
            <person name="Cole S.T."/>
            <person name="Brosch R."/>
            <person name="Parkhill J."/>
            <person name="Garnier T."/>
            <person name="Churcher C.M."/>
            <person name="Harris D.E."/>
            <person name="Gordon S.V."/>
            <person name="Eiglmeier K."/>
            <person name="Gas S."/>
            <person name="Barry C.E. III"/>
            <person name="Tekaia F."/>
            <person name="Badcock K."/>
            <person name="Basham D."/>
            <person name="Brown D."/>
            <person name="Chillingworth T."/>
            <person name="Connor R."/>
            <person name="Davies R.M."/>
            <person name="Devlin K."/>
            <person name="Feltwell T."/>
            <person name="Gentles S."/>
            <person name="Hamlin N."/>
            <person name="Holroyd S."/>
            <person name="Hornsby T."/>
            <person name="Jagels K."/>
            <person name="Krogh A."/>
            <person name="McLean J."/>
            <person name="Moule S."/>
            <person name="Murphy L.D."/>
            <person name="Oliver S."/>
            <person name="Osborne J."/>
            <person name="Quail M.A."/>
            <person name="Rajandream M.A."/>
            <person name="Rogers J."/>
            <person name="Rutter S."/>
            <person name="Seeger K."/>
            <person name="Skelton S."/>
            <person name="Squares S."/>
            <person name="Squares R."/>
            <person name="Sulston J.E."/>
            <person name="Taylor K."/>
            <person name="Whitehead S."/>
            <person name="Barrell B.G."/>
        </authorList>
    </citation>
    <scope>NUCLEOTIDE SEQUENCE [LARGE SCALE GENOMIC DNA]</scope>
    <source>
        <strain>ATCC 25618 / H37Rv</strain>
    </source>
</reference>
<reference key="2">
    <citation type="journal article" date="2013" name="PLoS ONE">
        <title>The PE16 (Rv1430) of Mycobacterium tuberculosis is an esterase belonging to serine hydrolase superfamily of proteins.</title>
        <authorList>
            <person name="Sultana R."/>
            <person name="Vemula M.H."/>
            <person name="Banerjee S."/>
            <person name="Guruprasad L."/>
        </authorList>
    </citation>
    <scope>FUNCTION</scope>
    <scope>CATALYTIC ACTIVITY</scope>
    <scope>ACTIVITY REGULATION</scope>
    <scope>BIOPHYSICOCHEMICAL PROPERTIES</scope>
    <scope>MUTAGENESIS OF SER-199</scope>
    <scope>ACTIVE SITE</scope>
    <source>
        <strain>H37Rv</strain>
    </source>
</reference>
<dbReference type="EC" id="3.1.1.-" evidence="2"/>
<dbReference type="EMBL" id="AL123456">
    <property type="protein sequence ID" value="CCP44189.1"/>
    <property type="molecule type" value="Genomic_DNA"/>
</dbReference>
<dbReference type="RefSeq" id="WP_003407378.1">
    <property type="nucleotide sequence ID" value="NZ_NVQJ01000038.1"/>
</dbReference>
<dbReference type="RefSeq" id="YP_177810.1">
    <property type="nucleotide sequence ID" value="NC_000962.3"/>
</dbReference>
<dbReference type="SMR" id="L7N697"/>
<dbReference type="STRING" id="83332.Rv1430"/>
<dbReference type="SwissLipids" id="SLP:000001335"/>
<dbReference type="ESTHER" id="myctu-Rv1430">
    <property type="family name" value="PE-PPE"/>
</dbReference>
<dbReference type="PaxDb" id="83332-Rv1430"/>
<dbReference type="DNASU" id="886652"/>
<dbReference type="GeneID" id="886652"/>
<dbReference type="KEGG" id="mtu:Rv1430"/>
<dbReference type="KEGG" id="mtv:RVBD_1430"/>
<dbReference type="PATRIC" id="fig|83332.111.peg.1589"/>
<dbReference type="TubercuList" id="Rv1430"/>
<dbReference type="eggNOG" id="COG3391">
    <property type="taxonomic scope" value="Bacteria"/>
</dbReference>
<dbReference type="eggNOG" id="COG5651">
    <property type="taxonomic scope" value="Bacteria"/>
</dbReference>
<dbReference type="InParanoid" id="L7N697"/>
<dbReference type="OrthoDB" id="4568361at2"/>
<dbReference type="PhylomeDB" id="L7N697"/>
<dbReference type="Proteomes" id="UP000001584">
    <property type="component" value="Chromosome"/>
</dbReference>
<dbReference type="GO" id="GO:0016020">
    <property type="term" value="C:membrane"/>
    <property type="evidence" value="ECO:0007669"/>
    <property type="project" value="UniProtKB-SubCell"/>
</dbReference>
<dbReference type="GO" id="GO:0052689">
    <property type="term" value="F:carboxylic ester hydrolase activity"/>
    <property type="evidence" value="ECO:0007669"/>
    <property type="project" value="UniProtKB-KW"/>
</dbReference>
<dbReference type="Gene3D" id="3.40.50.1820">
    <property type="entry name" value="alpha/beta hydrolase"/>
    <property type="match status" value="1"/>
</dbReference>
<dbReference type="Gene3D" id="1.10.287.850">
    <property type="entry name" value="HP0062-like domain"/>
    <property type="match status" value="1"/>
</dbReference>
<dbReference type="InterPro" id="IPR029058">
    <property type="entry name" value="AB_hydrolase_fold"/>
</dbReference>
<dbReference type="InterPro" id="IPR000084">
    <property type="entry name" value="PE-PGRS_N"/>
</dbReference>
<dbReference type="InterPro" id="IPR013228">
    <property type="entry name" value="PE-PPE_C"/>
</dbReference>
<dbReference type="Pfam" id="PF00934">
    <property type="entry name" value="PE"/>
    <property type="match status" value="1"/>
</dbReference>
<dbReference type="Pfam" id="PF08237">
    <property type="entry name" value="PE-PPE"/>
    <property type="match status" value="1"/>
</dbReference>
<dbReference type="SUPFAM" id="SSF53474">
    <property type="entry name" value="alpha/beta-Hydrolases"/>
    <property type="match status" value="1"/>
</dbReference>
<dbReference type="SUPFAM" id="SSF140459">
    <property type="entry name" value="PE/PPE dimer-like"/>
    <property type="match status" value="1"/>
</dbReference>
<protein>
    <recommendedName>
        <fullName evidence="4">Esterase PE16</fullName>
        <ecNumber evidence="2">3.1.1.-</ecNumber>
    </recommendedName>
    <alternativeName>
        <fullName evidence="4">PE family protein PE16</fullName>
    </alternativeName>
</protein>
<proteinExistence type="evidence at protein level"/>
<accession>L7N697</accession>
<accession>I6XBG6</accession>
<comment type="function">
    <text evidence="2">Esterase that hydrolyzes short to medium chain fatty acid esters with the highest specific activity for p-nitrophenyl caproate (pNPC6). Has lower activity with p-nitrophenyl caprylate (pNPC8) and p-nitrophenyl butyrate (pNPC4). Has weak activity with p-nitrophenyl caprate (pNPC10) and p-nitrophenyl laurate (pNPC12). Does not possess lipolytic activity and cutinase activity.</text>
</comment>
<comment type="catalytic activity">
    <reaction evidence="2">
        <text>a hexanoate ester + H2O = an aliphatic alcohol + hexanoate + H(+)</text>
        <dbReference type="Rhea" id="RHEA:47352"/>
        <dbReference type="ChEBI" id="CHEBI:2571"/>
        <dbReference type="ChEBI" id="CHEBI:15377"/>
        <dbReference type="ChEBI" id="CHEBI:15378"/>
        <dbReference type="ChEBI" id="CHEBI:17120"/>
        <dbReference type="ChEBI" id="CHEBI:87656"/>
    </reaction>
</comment>
<comment type="catalytic activity">
    <reaction evidence="2">
        <text>an octanoate ester + H2O = an aliphatic alcohol + octanoate + H(+)</text>
        <dbReference type="Rhea" id="RHEA:47356"/>
        <dbReference type="ChEBI" id="CHEBI:2571"/>
        <dbReference type="ChEBI" id="CHEBI:15377"/>
        <dbReference type="ChEBI" id="CHEBI:15378"/>
        <dbReference type="ChEBI" id="CHEBI:25646"/>
        <dbReference type="ChEBI" id="CHEBI:87657"/>
    </reaction>
</comment>
<comment type="catalytic activity">
    <reaction evidence="2">
        <text>a butanoate ester + H2O = an aliphatic alcohol + butanoate + H(+)</text>
        <dbReference type="Rhea" id="RHEA:47348"/>
        <dbReference type="ChEBI" id="CHEBI:2571"/>
        <dbReference type="ChEBI" id="CHEBI:15377"/>
        <dbReference type="ChEBI" id="CHEBI:15378"/>
        <dbReference type="ChEBI" id="CHEBI:17968"/>
        <dbReference type="ChEBI" id="CHEBI:50477"/>
    </reaction>
</comment>
<comment type="activity regulation">
    <text evidence="2">Esterase activity is significantly inhibited by the serine modifier phenylmethylsulfonyl fluoride (PMSF).</text>
</comment>
<comment type="biophysicochemical properties">
    <kinetics>
        <KM evidence="2">5.2 mM for pNPC4</KM>
        <KM evidence="2">5.15 mM for pNPC6</KM>
        <KM evidence="2">10 mM for pNPC8</KM>
        <text evidence="2">kcat is 341 sec(-1) with pNPC4 as substrate. kcat is 534 sec(-1) with pNPC6 as substrate. kcat is 305 sec(-1) with pNPC8 as substrate.</text>
    </kinetics>
    <phDependence>
        <text evidence="2">Optimum pH is 7.0-8.0.</text>
    </phDependence>
    <temperatureDependence>
        <text evidence="2">Optimum temperature is 37-38 degrees Celsius.</text>
    </temperatureDependence>
</comment>
<comment type="subcellular location">
    <subcellularLocation>
        <location evidence="1">Membrane</location>
        <topology evidence="1">Single-pass membrane protein</topology>
    </subcellularLocation>
</comment>
<comment type="similarity">
    <text evidence="4">Belongs to the mycobacterial PE family.</text>
</comment>
<feature type="chain" id="PRO_0000448332" description="Esterase PE16">
    <location>
        <begin position="1"/>
        <end position="528"/>
    </location>
</feature>
<feature type="transmembrane region" description="Helical" evidence="1">
    <location>
        <begin position="503"/>
        <end position="523"/>
    </location>
</feature>
<feature type="domain" description="PE" evidence="1">
    <location>
        <begin position="1"/>
        <end position="93"/>
    </location>
</feature>
<feature type="domain" description="PE-PPE" evidence="1">
    <location>
        <begin position="149"/>
        <end position="369"/>
    </location>
</feature>
<feature type="region of interest" description="Linker" evidence="5">
    <location>
        <begin position="94"/>
        <end position="143"/>
    </location>
</feature>
<feature type="active site" evidence="5">
    <location>
        <position position="199"/>
    </location>
</feature>
<feature type="mutagenesis site" description="Loss of activity." evidence="2">
    <original>S</original>
    <variation>A</variation>
    <location>
        <position position="199"/>
    </location>
</feature>
<keyword id="KW-0378">Hydrolase</keyword>
<keyword id="KW-0472">Membrane</keyword>
<keyword id="KW-1185">Reference proteome</keyword>
<keyword id="KW-0719">Serine esterase</keyword>
<keyword id="KW-0812">Transmembrane</keyword>
<keyword id="KW-1133">Transmembrane helix</keyword>
<sequence>MSFVFAVPEMVAATASDLASLGAALSEATAAAAIPTTQVLAAAADEVSAAIAELFGAHGQEFQALSAQASAFHDRFVRALSAAAGWYVDAEAANAALVDTAATGASELGSGGRTALILGSTGTPRPPFDYMQQVYDRYIAPHYLGYAFSGLYTPAQFQPWTGIPSLTYDQSVAEGAGYLHTAIMQQVAAGNDVVVLGFSQGASVATLEMRHLASLPAGVAPSPDQLSFVLLGNPNNPNGGILARFPGLYLQSLGLTFNGATPDTDYATTIYTTQYDGFADFPKYPLNILADVNALLGIYYSHSLYYGLTPEQVASGIVLPVSSPDTNTTYILLPNEDLPLLQPLRGIVPEPLLDLIEPDLRAIIELGYDRTGYADVPTPAALFPVHIDPIAVPPQIGAAIGGPLTALDGLLDTVINDQLNPVVTSGIYQAGAELSVAAAGYGAPAGVTNAIFIGQQVLPILVEGPGALVTADTHYLVDAIQDLAAGDLSGFNQNLQLIPATNIALLVFAAGIPAVAAVAILTGQDFPV</sequence>
<gene>
    <name evidence="3" type="primary">PE16</name>
    <name evidence="6" type="ordered locus">Rv1430</name>
</gene>